<protein>
    <recommendedName>
        <fullName evidence="1">NAD(P)H-quinone oxidoreductase subunit L</fullName>
        <ecNumber evidence="1">7.1.1.-</ecNumber>
    </recommendedName>
    <alternativeName>
        <fullName evidence="1">NAD(P)H dehydrogenase I subunit L</fullName>
    </alternativeName>
    <alternativeName>
        <fullName>NDH-1 subunit L</fullName>
    </alternativeName>
    <alternativeName>
        <fullName>NDH-L</fullName>
    </alternativeName>
</protein>
<feature type="chain" id="PRO_0000353682" description="NAD(P)H-quinone oxidoreductase subunit L">
    <location>
        <begin position="1"/>
        <end position="77"/>
    </location>
</feature>
<feature type="transmembrane region" description="Helical" evidence="1">
    <location>
        <begin position="12"/>
        <end position="32"/>
    </location>
</feature>
<feature type="transmembrane region" description="Helical" evidence="1">
    <location>
        <begin position="47"/>
        <end position="67"/>
    </location>
</feature>
<evidence type="ECO:0000255" key="1">
    <source>
        <dbReference type="HAMAP-Rule" id="MF_01355"/>
    </source>
</evidence>
<organism>
    <name type="scientific">Prochlorococcus marinus subsp. pastoris (strain CCMP1986 / NIES-2087 / MED4)</name>
    <dbReference type="NCBI Taxonomy" id="59919"/>
    <lineage>
        <taxon>Bacteria</taxon>
        <taxon>Bacillati</taxon>
        <taxon>Cyanobacteriota</taxon>
        <taxon>Cyanophyceae</taxon>
        <taxon>Synechococcales</taxon>
        <taxon>Prochlorococcaceae</taxon>
        <taxon>Prochlorococcus</taxon>
    </lineage>
</organism>
<name>NDHL_PROMP</name>
<sequence length="77" mass="8970">MESIFNNSFATLVAYVGIVSIYLLVIPLILFYWMNNRWNVMGKFERLIVYGLVFLFFPGLILFSPFLNLRLRGDSKG</sequence>
<reference key="1">
    <citation type="journal article" date="2003" name="Nature">
        <title>Genome divergence in two Prochlorococcus ecotypes reflects oceanic niche differentiation.</title>
        <authorList>
            <person name="Rocap G."/>
            <person name="Larimer F.W."/>
            <person name="Lamerdin J.E."/>
            <person name="Malfatti S."/>
            <person name="Chain P."/>
            <person name="Ahlgren N.A."/>
            <person name="Arellano A."/>
            <person name="Coleman M."/>
            <person name="Hauser L."/>
            <person name="Hess W.R."/>
            <person name="Johnson Z.I."/>
            <person name="Land M.L."/>
            <person name="Lindell D."/>
            <person name="Post A.F."/>
            <person name="Regala W."/>
            <person name="Shah M."/>
            <person name="Shaw S.L."/>
            <person name="Steglich C."/>
            <person name="Sullivan M.B."/>
            <person name="Ting C.S."/>
            <person name="Tolonen A."/>
            <person name="Webb E.A."/>
            <person name="Zinser E.R."/>
            <person name="Chisholm S.W."/>
        </authorList>
    </citation>
    <scope>NUCLEOTIDE SEQUENCE [LARGE SCALE GENOMIC DNA]</scope>
    <source>
        <strain>CCMP1986 / NIES-2087 / MED4</strain>
    </source>
</reference>
<keyword id="KW-0472">Membrane</keyword>
<keyword id="KW-0520">NAD</keyword>
<keyword id="KW-0521">NADP</keyword>
<keyword id="KW-0618">Plastoquinone</keyword>
<keyword id="KW-0874">Quinone</keyword>
<keyword id="KW-0793">Thylakoid</keyword>
<keyword id="KW-1278">Translocase</keyword>
<keyword id="KW-0812">Transmembrane</keyword>
<keyword id="KW-1133">Transmembrane helix</keyword>
<keyword id="KW-0813">Transport</keyword>
<gene>
    <name evidence="1" type="primary">ndhL</name>
    <name type="ordered locus">PMM0570</name>
</gene>
<accession>Q7V2B1</accession>
<proteinExistence type="inferred from homology"/>
<comment type="function">
    <text evidence="1">NDH-1 shuttles electrons from an unknown electron donor, via FMN and iron-sulfur (Fe-S) centers, to quinones in the respiratory and/or the photosynthetic chain. The immediate electron acceptor for the enzyme in this species is believed to be plastoquinone. Couples the redox reaction to proton translocation, and thus conserves the redox energy in a proton gradient. Cyanobacterial NDH-1 also plays a role in inorganic carbon-concentration.</text>
</comment>
<comment type="catalytic activity">
    <reaction evidence="1">
        <text>a plastoquinone + NADH + (n+1) H(+)(in) = a plastoquinol + NAD(+) + n H(+)(out)</text>
        <dbReference type="Rhea" id="RHEA:42608"/>
        <dbReference type="Rhea" id="RHEA-COMP:9561"/>
        <dbReference type="Rhea" id="RHEA-COMP:9562"/>
        <dbReference type="ChEBI" id="CHEBI:15378"/>
        <dbReference type="ChEBI" id="CHEBI:17757"/>
        <dbReference type="ChEBI" id="CHEBI:57540"/>
        <dbReference type="ChEBI" id="CHEBI:57945"/>
        <dbReference type="ChEBI" id="CHEBI:62192"/>
    </reaction>
</comment>
<comment type="catalytic activity">
    <reaction evidence="1">
        <text>a plastoquinone + NADPH + (n+1) H(+)(in) = a plastoquinol + NADP(+) + n H(+)(out)</text>
        <dbReference type="Rhea" id="RHEA:42612"/>
        <dbReference type="Rhea" id="RHEA-COMP:9561"/>
        <dbReference type="Rhea" id="RHEA-COMP:9562"/>
        <dbReference type="ChEBI" id="CHEBI:15378"/>
        <dbReference type="ChEBI" id="CHEBI:17757"/>
        <dbReference type="ChEBI" id="CHEBI:57783"/>
        <dbReference type="ChEBI" id="CHEBI:58349"/>
        <dbReference type="ChEBI" id="CHEBI:62192"/>
    </reaction>
</comment>
<comment type="subunit">
    <text evidence="1">NDH-1 can be composed of about 15 different subunits; different subcomplexes with different compositions have been identified which probably have different functions.</text>
</comment>
<comment type="subcellular location">
    <subcellularLocation>
        <location evidence="1">Cellular thylakoid membrane</location>
        <topology evidence="1">Multi-pass membrane protein</topology>
    </subcellularLocation>
</comment>
<comment type="similarity">
    <text evidence="1">Belongs to the complex I NdhL subunit family.</text>
</comment>
<dbReference type="EC" id="7.1.1.-" evidence="1"/>
<dbReference type="EMBL" id="BX548174">
    <property type="protein sequence ID" value="CAE19029.1"/>
    <property type="molecule type" value="Genomic_DNA"/>
</dbReference>
<dbReference type="RefSeq" id="WP_011132204.1">
    <property type="nucleotide sequence ID" value="NC_005072.1"/>
</dbReference>
<dbReference type="SMR" id="Q7V2B1"/>
<dbReference type="STRING" id="59919.PMM0570"/>
<dbReference type="KEGG" id="pmm:PMM0570"/>
<dbReference type="eggNOG" id="ENOG5030RAT">
    <property type="taxonomic scope" value="Bacteria"/>
</dbReference>
<dbReference type="HOGENOM" id="CLU_171077_1_0_3"/>
<dbReference type="OrthoDB" id="517549at2"/>
<dbReference type="Proteomes" id="UP000001026">
    <property type="component" value="Chromosome"/>
</dbReference>
<dbReference type="GO" id="GO:0031676">
    <property type="term" value="C:plasma membrane-derived thylakoid membrane"/>
    <property type="evidence" value="ECO:0007669"/>
    <property type="project" value="UniProtKB-SubCell"/>
</dbReference>
<dbReference type="GO" id="GO:0016655">
    <property type="term" value="F:oxidoreductase activity, acting on NAD(P)H, quinone or similar compound as acceptor"/>
    <property type="evidence" value="ECO:0007669"/>
    <property type="project" value="UniProtKB-UniRule"/>
</dbReference>
<dbReference type="GO" id="GO:0048038">
    <property type="term" value="F:quinone binding"/>
    <property type="evidence" value="ECO:0007669"/>
    <property type="project" value="UniProtKB-KW"/>
</dbReference>
<dbReference type="HAMAP" id="MF_01355">
    <property type="entry name" value="NDH1_NDH1L"/>
    <property type="match status" value="1"/>
</dbReference>
<dbReference type="InterPro" id="IPR019654">
    <property type="entry name" value="NADH-quinone_OxRdatse_su_L"/>
</dbReference>
<dbReference type="PANTHER" id="PTHR36727">
    <property type="entry name" value="NAD(P)H-QUINONE OXIDOREDUCTASE SUBUNIT L, CHLOROPLASTIC"/>
    <property type="match status" value="1"/>
</dbReference>
<dbReference type="PANTHER" id="PTHR36727:SF2">
    <property type="entry name" value="NAD(P)H-QUINONE OXIDOREDUCTASE SUBUNIT L, CHLOROPLASTIC"/>
    <property type="match status" value="1"/>
</dbReference>
<dbReference type="Pfam" id="PF10716">
    <property type="entry name" value="NdhL"/>
    <property type="match status" value="1"/>
</dbReference>